<comment type="similarity">
    <text evidence="3">Belongs to the OSBP family.</text>
</comment>
<protein>
    <recommendedName>
        <fullName>Oxysterol-binding protein 9</fullName>
        <shortName>OSBPi</shortName>
    </recommendedName>
</protein>
<evidence type="ECO:0000255" key="1"/>
<evidence type="ECO:0000256" key="2">
    <source>
        <dbReference type="SAM" id="MobiDB-lite"/>
    </source>
</evidence>
<evidence type="ECO:0000305" key="3"/>
<proteinExistence type="inferred from homology"/>
<dbReference type="EMBL" id="AAFI02000064">
    <property type="protein sequence ID" value="EAL65225.1"/>
    <property type="molecule type" value="Genomic_DNA"/>
</dbReference>
<dbReference type="RefSeq" id="XP_638575.1">
    <property type="nucleotide sequence ID" value="XM_633483.1"/>
</dbReference>
<dbReference type="SMR" id="Q54PS9"/>
<dbReference type="PaxDb" id="44689-DDB0237802"/>
<dbReference type="EnsemblProtists" id="EAL65225">
    <property type="protein sequence ID" value="EAL65225"/>
    <property type="gene ID" value="DDB_G0284353"/>
</dbReference>
<dbReference type="GeneID" id="8624547"/>
<dbReference type="KEGG" id="ddi:DDB_G0284353"/>
<dbReference type="dictyBase" id="DDB_G0284353">
    <property type="gene designation" value="osbI"/>
</dbReference>
<dbReference type="VEuPathDB" id="AmoebaDB:DDB_G0284353"/>
<dbReference type="eggNOG" id="KOG2210">
    <property type="taxonomic scope" value="Eukaryota"/>
</dbReference>
<dbReference type="HOGENOM" id="CLU_042600_1_0_1"/>
<dbReference type="InParanoid" id="Q54PS9"/>
<dbReference type="OMA" id="GVCWELV"/>
<dbReference type="PhylomeDB" id="Q54PS9"/>
<dbReference type="PRO" id="PR:Q54PS9"/>
<dbReference type="Proteomes" id="UP000002195">
    <property type="component" value="Chromosome 4"/>
</dbReference>
<dbReference type="GO" id="GO:0005829">
    <property type="term" value="C:cytosol"/>
    <property type="evidence" value="ECO:0000318"/>
    <property type="project" value="GO_Central"/>
</dbReference>
<dbReference type="GO" id="GO:0016020">
    <property type="term" value="C:membrane"/>
    <property type="evidence" value="ECO:0000318"/>
    <property type="project" value="GO_Central"/>
</dbReference>
<dbReference type="GO" id="GO:0032934">
    <property type="term" value="F:sterol binding"/>
    <property type="evidence" value="ECO:0000318"/>
    <property type="project" value="GO_Central"/>
</dbReference>
<dbReference type="FunFam" id="2.40.160.120:FF:000015">
    <property type="entry name" value="Oxysterol binding protein, putative"/>
    <property type="match status" value="1"/>
</dbReference>
<dbReference type="Gene3D" id="2.40.160.120">
    <property type="match status" value="1"/>
</dbReference>
<dbReference type="InterPro" id="IPR037239">
    <property type="entry name" value="OSBP_sf"/>
</dbReference>
<dbReference type="InterPro" id="IPR000648">
    <property type="entry name" value="Oxysterol-bd"/>
</dbReference>
<dbReference type="PANTHER" id="PTHR10972:SF148">
    <property type="entry name" value="OXYSTEROL-BINDING PROTEIN 9"/>
    <property type="match status" value="1"/>
</dbReference>
<dbReference type="PANTHER" id="PTHR10972">
    <property type="entry name" value="OXYSTEROL-BINDING PROTEIN-RELATED"/>
    <property type="match status" value="1"/>
</dbReference>
<dbReference type="Pfam" id="PF01237">
    <property type="entry name" value="Oxysterol_BP"/>
    <property type="match status" value="1"/>
</dbReference>
<dbReference type="SUPFAM" id="SSF144000">
    <property type="entry name" value="Oxysterol-binding protein-like"/>
    <property type="match status" value="1"/>
</dbReference>
<accession>Q54PS9</accession>
<gene>
    <name type="primary">osbI</name>
    <name type="ORF">DDB_G0284353</name>
</gene>
<feature type="chain" id="PRO_0000328475" description="Oxysterol-binding protein 9">
    <location>
        <begin position="1"/>
        <end position="428"/>
    </location>
</feature>
<feature type="region of interest" description="Disordered" evidence="2">
    <location>
        <begin position="1"/>
        <end position="32"/>
    </location>
</feature>
<feature type="region of interest" description="Disordered" evidence="2">
    <location>
        <begin position="396"/>
        <end position="428"/>
    </location>
</feature>
<feature type="coiled-coil region" evidence="1">
    <location>
        <begin position="389"/>
        <end position="422"/>
    </location>
</feature>
<feature type="compositionally biased region" description="Polar residues" evidence="2">
    <location>
        <begin position="1"/>
        <end position="11"/>
    </location>
</feature>
<feature type="compositionally biased region" description="Low complexity" evidence="2">
    <location>
        <begin position="18"/>
        <end position="32"/>
    </location>
</feature>
<reference key="1">
    <citation type="journal article" date="2005" name="Nature">
        <title>The genome of the social amoeba Dictyostelium discoideum.</title>
        <authorList>
            <person name="Eichinger L."/>
            <person name="Pachebat J.A."/>
            <person name="Gloeckner G."/>
            <person name="Rajandream M.A."/>
            <person name="Sucgang R."/>
            <person name="Berriman M."/>
            <person name="Song J."/>
            <person name="Olsen R."/>
            <person name="Szafranski K."/>
            <person name="Xu Q."/>
            <person name="Tunggal B."/>
            <person name="Kummerfeld S."/>
            <person name="Madera M."/>
            <person name="Konfortov B.A."/>
            <person name="Rivero F."/>
            <person name="Bankier A.T."/>
            <person name="Lehmann R."/>
            <person name="Hamlin N."/>
            <person name="Davies R."/>
            <person name="Gaudet P."/>
            <person name="Fey P."/>
            <person name="Pilcher K."/>
            <person name="Chen G."/>
            <person name="Saunders D."/>
            <person name="Sodergren E.J."/>
            <person name="Davis P."/>
            <person name="Kerhornou A."/>
            <person name="Nie X."/>
            <person name="Hall N."/>
            <person name="Anjard C."/>
            <person name="Hemphill L."/>
            <person name="Bason N."/>
            <person name="Farbrother P."/>
            <person name="Desany B."/>
            <person name="Just E."/>
            <person name="Morio T."/>
            <person name="Rost R."/>
            <person name="Churcher C.M."/>
            <person name="Cooper J."/>
            <person name="Haydock S."/>
            <person name="van Driessche N."/>
            <person name="Cronin A."/>
            <person name="Goodhead I."/>
            <person name="Muzny D.M."/>
            <person name="Mourier T."/>
            <person name="Pain A."/>
            <person name="Lu M."/>
            <person name="Harper D."/>
            <person name="Lindsay R."/>
            <person name="Hauser H."/>
            <person name="James K.D."/>
            <person name="Quiles M."/>
            <person name="Madan Babu M."/>
            <person name="Saito T."/>
            <person name="Buchrieser C."/>
            <person name="Wardroper A."/>
            <person name="Felder M."/>
            <person name="Thangavelu M."/>
            <person name="Johnson D."/>
            <person name="Knights A."/>
            <person name="Loulseged H."/>
            <person name="Mungall K.L."/>
            <person name="Oliver K."/>
            <person name="Price C."/>
            <person name="Quail M.A."/>
            <person name="Urushihara H."/>
            <person name="Hernandez J."/>
            <person name="Rabbinowitsch E."/>
            <person name="Steffen D."/>
            <person name="Sanders M."/>
            <person name="Ma J."/>
            <person name="Kohara Y."/>
            <person name="Sharp S."/>
            <person name="Simmonds M.N."/>
            <person name="Spiegler S."/>
            <person name="Tivey A."/>
            <person name="Sugano S."/>
            <person name="White B."/>
            <person name="Walker D."/>
            <person name="Woodward J.R."/>
            <person name="Winckler T."/>
            <person name="Tanaka Y."/>
            <person name="Shaulsky G."/>
            <person name="Schleicher M."/>
            <person name="Weinstock G.M."/>
            <person name="Rosenthal A."/>
            <person name="Cox E.C."/>
            <person name="Chisholm R.L."/>
            <person name="Gibbs R.A."/>
            <person name="Loomis W.F."/>
            <person name="Platzer M."/>
            <person name="Kay R.R."/>
            <person name="Williams J.G."/>
            <person name="Dear P.H."/>
            <person name="Noegel A.A."/>
            <person name="Barrell B.G."/>
            <person name="Kuspa A."/>
        </authorList>
    </citation>
    <scope>NUCLEOTIDE SEQUENCE [LARGE SCALE GENOMIC DNA]</scope>
    <source>
        <strain>AX4</strain>
    </source>
</reference>
<name>OSB9_DICDI</name>
<organism>
    <name type="scientific">Dictyostelium discoideum</name>
    <name type="common">Social amoeba</name>
    <dbReference type="NCBI Taxonomy" id="44689"/>
    <lineage>
        <taxon>Eukaryota</taxon>
        <taxon>Amoebozoa</taxon>
        <taxon>Evosea</taxon>
        <taxon>Eumycetozoa</taxon>
        <taxon>Dictyostelia</taxon>
        <taxon>Dictyosteliales</taxon>
        <taxon>Dictyosteliaceae</taxon>
        <taxon>Dictyostelium</taxon>
    </lineage>
</organism>
<sequence>MTEVQSITTSGEIKMPLSPSSSSSSISSSTTNNTNIKSIPILSQCYSFSGKGNGKELQDKIFRQNSRHSNGGWKFVDDIELKKQRGVCWSLVKSVGNSIIEGKELTSTCLPIELFEARSFLEKVTDTMAFGPLYLKAAAETNDPIERMKMVASFVVSGLHLTTTIAKPFNPLLGETFECDLADGSSAFCEQISHHPPISSWKLLEKDGKYKYTGHFIWSAGCRGNVVKGCLKGPHNIEFADGTNIAFTYPDVLIKGIFWGDRVTEFCGKMLFTDEKNDLACELIFNPNALGFVKSFFSKQKTPCDTIDGRIFRINNNKIKDGNCDKINPDDVLCKMEGTWLTSFLIDQVEYWNIRMIPHGVIYRDPETTLPTDSGRRDDIKHLKMGNLEEAKKYKALIEDNQRKQKKEKDEKLKKDEKLKKEDKKNQK</sequence>
<keyword id="KW-0175">Coiled coil</keyword>
<keyword id="KW-1185">Reference proteome</keyword>